<evidence type="ECO:0000255" key="1">
    <source>
        <dbReference type="HAMAP-Rule" id="MF_00454"/>
    </source>
</evidence>
<gene>
    <name evidence="1" type="primary">fluC</name>
    <name evidence="1" type="synonym">crcB</name>
    <name type="ordered locus">PputW619_2862</name>
</gene>
<accession>B1J9E8</accession>
<dbReference type="EMBL" id="CP000949">
    <property type="protein sequence ID" value="ACA73354.1"/>
    <property type="molecule type" value="Genomic_DNA"/>
</dbReference>
<dbReference type="SMR" id="B1J9E8"/>
<dbReference type="STRING" id="390235.PputW619_2862"/>
<dbReference type="KEGG" id="ppw:PputW619_2862"/>
<dbReference type="eggNOG" id="COG0239">
    <property type="taxonomic scope" value="Bacteria"/>
</dbReference>
<dbReference type="HOGENOM" id="CLU_114342_3_3_6"/>
<dbReference type="OrthoDB" id="9806299at2"/>
<dbReference type="GO" id="GO:0005886">
    <property type="term" value="C:plasma membrane"/>
    <property type="evidence" value="ECO:0007669"/>
    <property type="project" value="UniProtKB-SubCell"/>
</dbReference>
<dbReference type="GO" id="GO:0062054">
    <property type="term" value="F:fluoride channel activity"/>
    <property type="evidence" value="ECO:0007669"/>
    <property type="project" value="UniProtKB-UniRule"/>
</dbReference>
<dbReference type="GO" id="GO:0046872">
    <property type="term" value="F:metal ion binding"/>
    <property type="evidence" value="ECO:0007669"/>
    <property type="project" value="UniProtKB-KW"/>
</dbReference>
<dbReference type="GO" id="GO:0140114">
    <property type="term" value="P:cellular detoxification of fluoride"/>
    <property type="evidence" value="ECO:0007669"/>
    <property type="project" value="UniProtKB-UniRule"/>
</dbReference>
<dbReference type="HAMAP" id="MF_00454">
    <property type="entry name" value="FluC"/>
    <property type="match status" value="1"/>
</dbReference>
<dbReference type="InterPro" id="IPR003691">
    <property type="entry name" value="FluC"/>
</dbReference>
<dbReference type="NCBIfam" id="TIGR00494">
    <property type="entry name" value="crcB"/>
    <property type="match status" value="1"/>
</dbReference>
<dbReference type="NCBIfam" id="NF010792">
    <property type="entry name" value="PRK14196.1"/>
    <property type="match status" value="1"/>
</dbReference>
<dbReference type="PANTHER" id="PTHR28259">
    <property type="entry name" value="FLUORIDE EXPORT PROTEIN 1-RELATED"/>
    <property type="match status" value="1"/>
</dbReference>
<dbReference type="PANTHER" id="PTHR28259:SF1">
    <property type="entry name" value="FLUORIDE EXPORT PROTEIN 1-RELATED"/>
    <property type="match status" value="1"/>
</dbReference>
<dbReference type="Pfam" id="PF02537">
    <property type="entry name" value="CRCB"/>
    <property type="match status" value="1"/>
</dbReference>
<feature type="chain" id="PRO_1000125146" description="Fluoride-specific ion channel FluC">
    <location>
        <begin position="1"/>
        <end position="127"/>
    </location>
</feature>
<feature type="transmembrane region" description="Helical" evidence="1">
    <location>
        <begin position="4"/>
        <end position="24"/>
    </location>
</feature>
<feature type="transmembrane region" description="Helical" evidence="1">
    <location>
        <begin position="35"/>
        <end position="55"/>
    </location>
</feature>
<feature type="transmembrane region" description="Helical" evidence="1">
    <location>
        <begin position="68"/>
        <end position="88"/>
    </location>
</feature>
<feature type="transmembrane region" description="Helical" evidence="1">
    <location>
        <begin position="96"/>
        <end position="116"/>
    </location>
</feature>
<feature type="binding site" evidence="1">
    <location>
        <position position="75"/>
    </location>
    <ligand>
        <name>Na(+)</name>
        <dbReference type="ChEBI" id="CHEBI:29101"/>
        <note>structural</note>
    </ligand>
</feature>
<feature type="binding site" evidence="1">
    <location>
        <position position="78"/>
    </location>
    <ligand>
        <name>Na(+)</name>
        <dbReference type="ChEBI" id="CHEBI:29101"/>
        <note>structural</note>
    </ligand>
</feature>
<comment type="function">
    <text evidence="1">Fluoride-specific ion channel. Important for reducing fluoride concentration in the cell, thus reducing its toxicity.</text>
</comment>
<comment type="catalytic activity">
    <reaction evidence="1">
        <text>fluoride(in) = fluoride(out)</text>
        <dbReference type="Rhea" id="RHEA:76159"/>
        <dbReference type="ChEBI" id="CHEBI:17051"/>
    </reaction>
    <physiologicalReaction direction="left-to-right" evidence="1">
        <dbReference type="Rhea" id="RHEA:76160"/>
    </physiologicalReaction>
</comment>
<comment type="activity regulation">
    <text evidence="1">Na(+) is not transported, but it plays an essential structural role and its presence is essential for fluoride channel function.</text>
</comment>
<comment type="subcellular location">
    <subcellularLocation>
        <location evidence="1">Cell inner membrane</location>
        <topology evidence="1">Multi-pass membrane protein</topology>
    </subcellularLocation>
</comment>
<comment type="similarity">
    <text evidence="1">Belongs to the fluoride channel Fluc/FEX (TC 1.A.43) family.</text>
</comment>
<name>FLUC_PSEPW</name>
<organism>
    <name type="scientific">Pseudomonas putida (strain W619)</name>
    <dbReference type="NCBI Taxonomy" id="390235"/>
    <lineage>
        <taxon>Bacteria</taxon>
        <taxon>Pseudomonadati</taxon>
        <taxon>Pseudomonadota</taxon>
        <taxon>Gammaproteobacteria</taxon>
        <taxon>Pseudomonadales</taxon>
        <taxon>Pseudomonadaceae</taxon>
        <taxon>Pseudomonas</taxon>
    </lineage>
</organism>
<reference key="1">
    <citation type="submission" date="2008-02" db="EMBL/GenBank/DDBJ databases">
        <title>Complete sequence of Pseudomonas putida W619.</title>
        <authorList>
            <person name="Copeland A."/>
            <person name="Lucas S."/>
            <person name="Lapidus A."/>
            <person name="Barry K."/>
            <person name="Detter J.C."/>
            <person name="Glavina del Rio T."/>
            <person name="Dalin E."/>
            <person name="Tice H."/>
            <person name="Pitluck S."/>
            <person name="Chain P."/>
            <person name="Malfatti S."/>
            <person name="Shin M."/>
            <person name="Vergez L."/>
            <person name="Schmutz J."/>
            <person name="Larimer F."/>
            <person name="Land M."/>
            <person name="Hauser L."/>
            <person name="Kyrpides N."/>
            <person name="Kim E."/>
            <person name="Taghavi S."/>
            <person name="Vangronsveld D."/>
            <person name="van der Lelie D."/>
            <person name="Richardson P."/>
        </authorList>
    </citation>
    <scope>NUCLEOTIDE SEQUENCE [LARGE SCALE GENOMIC DNA]</scope>
    <source>
        <strain>W619</strain>
    </source>
</reference>
<proteinExistence type="inferred from homology"/>
<protein>
    <recommendedName>
        <fullName evidence="1">Fluoride-specific ion channel FluC</fullName>
    </recommendedName>
</protein>
<sequence>MLKSLLAIGLGAMVGAWLRWGLGMKLNALFPAVPPGTLLANLIGGYIIGLAIAFFSASPSLSPEWRLLLITGFCGGLTTFSTFSAEVVSLIQEGRILWALGSIALHVSGSLLMTAAGLATFYFISGR</sequence>
<keyword id="KW-0997">Cell inner membrane</keyword>
<keyword id="KW-1003">Cell membrane</keyword>
<keyword id="KW-0407">Ion channel</keyword>
<keyword id="KW-0406">Ion transport</keyword>
<keyword id="KW-0472">Membrane</keyword>
<keyword id="KW-0479">Metal-binding</keyword>
<keyword id="KW-0915">Sodium</keyword>
<keyword id="KW-0812">Transmembrane</keyword>
<keyword id="KW-1133">Transmembrane helix</keyword>
<keyword id="KW-0813">Transport</keyword>